<reference key="1">
    <citation type="journal article" date="2002" name="Nucleic Acids Res.">
        <title>Genome sequence of Shigella flexneri 2a: insights into pathogenicity through comparison with genomes of Escherichia coli K12 and O157.</title>
        <authorList>
            <person name="Jin Q."/>
            <person name="Yuan Z."/>
            <person name="Xu J."/>
            <person name="Wang Y."/>
            <person name="Shen Y."/>
            <person name="Lu W."/>
            <person name="Wang J."/>
            <person name="Liu H."/>
            <person name="Yang J."/>
            <person name="Yang F."/>
            <person name="Zhang X."/>
            <person name="Zhang J."/>
            <person name="Yang G."/>
            <person name="Wu H."/>
            <person name="Qu D."/>
            <person name="Dong J."/>
            <person name="Sun L."/>
            <person name="Xue Y."/>
            <person name="Zhao A."/>
            <person name="Gao Y."/>
            <person name="Zhu J."/>
            <person name="Kan B."/>
            <person name="Ding K."/>
            <person name="Chen S."/>
            <person name="Cheng H."/>
            <person name="Yao Z."/>
            <person name="He B."/>
            <person name="Chen R."/>
            <person name="Ma D."/>
            <person name="Qiang B."/>
            <person name="Wen Y."/>
            <person name="Hou Y."/>
            <person name="Yu J."/>
        </authorList>
    </citation>
    <scope>NUCLEOTIDE SEQUENCE [LARGE SCALE GENOMIC DNA]</scope>
    <source>
        <strain>301 / Serotype 2a</strain>
    </source>
</reference>
<reference key="2">
    <citation type="journal article" date="2003" name="Infect. Immun.">
        <title>Complete genome sequence and comparative genomics of Shigella flexneri serotype 2a strain 2457T.</title>
        <authorList>
            <person name="Wei J."/>
            <person name="Goldberg M.B."/>
            <person name="Burland V."/>
            <person name="Venkatesan M.M."/>
            <person name="Deng W."/>
            <person name="Fournier G."/>
            <person name="Mayhew G.F."/>
            <person name="Plunkett G. III"/>
            <person name="Rose D.J."/>
            <person name="Darling A."/>
            <person name="Mau B."/>
            <person name="Perna N.T."/>
            <person name="Payne S.M."/>
            <person name="Runyen-Janecky L.J."/>
            <person name="Zhou S."/>
            <person name="Schwartz D.C."/>
            <person name="Blattner F.R."/>
        </authorList>
    </citation>
    <scope>NUCLEOTIDE SEQUENCE [LARGE SCALE GENOMIC DNA]</scope>
    <source>
        <strain>ATCC 700930 / 2457T / Serotype 2a</strain>
    </source>
</reference>
<protein>
    <recommendedName>
        <fullName>Peptide transport system ATP-binding protein SapD</fullName>
    </recommendedName>
</protein>
<organism>
    <name type="scientific">Shigella flexneri</name>
    <dbReference type="NCBI Taxonomy" id="623"/>
    <lineage>
        <taxon>Bacteria</taxon>
        <taxon>Pseudomonadati</taxon>
        <taxon>Pseudomonadota</taxon>
        <taxon>Gammaproteobacteria</taxon>
        <taxon>Enterobacterales</taxon>
        <taxon>Enterobacteriaceae</taxon>
        <taxon>Shigella</taxon>
    </lineage>
</organism>
<evidence type="ECO:0000250" key="1"/>
<evidence type="ECO:0000255" key="2">
    <source>
        <dbReference type="PROSITE-ProRule" id="PRU00434"/>
    </source>
</evidence>
<evidence type="ECO:0000305" key="3"/>
<proteinExistence type="inferred from homology"/>
<accession>P0AAH7</accession>
<accession>P36635</accession>
<gene>
    <name type="primary">sapD</name>
    <name type="ordered locus">SF1296</name>
    <name type="ordered locus">S1378</name>
</gene>
<feature type="chain" id="PRO_0000092966" description="Peptide transport system ATP-binding protein SapD">
    <location>
        <begin position="1"/>
        <end position="330"/>
    </location>
</feature>
<feature type="domain" description="ABC transporter" evidence="2">
    <location>
        <begin position="6"/>
        <end position="259"/>
    </location>
</feature>
<feature type="binding site" evidence="2">
    <location>
        <begin position="40"/>
        <end position="47"/>
    </location>
    <ligand>
        <name>ATP</name>
        <dbReference type="ChEBI" id="CHEBI:30616"/>
    </ligand>
</feature>
<comment type="function">
    <text evidence="1">Involved in a peptide intake transport system that plays a role in the resistance to antimicrobial peptides.</text>
</comment>
<comment type="subcellular location">
    <subcellularLocation>
        <location evidence="3">Cell inner membrane</location>
        <topology evidence="3">Peripheral membrane protein</topology>
    </subcellularLocation>
</comment>
<comment type="similarity">
    <text evidence="3">Belongs to the ABC transporter superfamily.</text>
</comment>
<name>SAPD_SHIFL</name>
<dbReference type="EMBL" id="AE005674">
    <property type="protein sequence ID" value="AAN42907.1"/>
    <property type="molecule type" value="Genomic_DNA"/>
</dbReference>
<dbReference type="EMBL" id="AE014073">
    <property type="protein sequence ID" value="AAP16790.1"/>
    <property type="molecule type" value="Genomic_DNA"/>
</dbReference>
<dbReference type="RefSeq" id="NP_707200.1">
    <property type="nucleotide sequence ID" value="NC_004337.2"/>
</dbReference>
<dbReference type="RefSeq" id="WP_001128858.1">
    <property type="nucleotide sequence ID" value="NZ_WPGW01000009.1"/>
</dbReference>
<dbReference type="SMR" id="P0AAH7"/>
<dbReference type="STRING" id="198214.SF1296"/>
<dbReference type="PaxDb" id="198214-SF1296"/>
<dbReference type="GeneID" id="1024262"/>
<dbReference type="GeneID" id="93775416"/>
<dbReference type="KEGG" id="sfl:SF1296"/>
<dbReference type="KEGG" id="sfx:S1378"/>
<dbReference type="PATRIC" id="fig|198214.7.peg.1522"/>
<dbReference type="HOGENOM" id="CLU_000604_1_23_6"/>
<dbReference type="Proteomes" id="UP000001006">
    <property type="component" value="Chromosome"/>
</dbReference>
<dbReference type="Proteomes" id="UP000002673">
    <property type="component" value="Chromosome"/>
</dbReference>
<dbReference type="GO" id="GO:0005886">
    <property type="term" value="C:plasma membrane"/>
    <property type="evidence" value="ECO:0007669"/>
    <property type="project" value="UniProtKB-SubCell"/>
</dbReference>
<dbReference type="GO" id="GO:0005524">
    <property type="term" value="F:ATP binding"/>
    <property type="evidence" value="ECO:0007669"/>
    <property type="project" value="UniProtKB-KW"/>
</dbReference>
<dbReference type="GO" id="GO:0016887">
    <property type="term" value="F:ATP hydrolysis activity"/>
    <property type="evidence" value="ECO:0007669"/>
    <property type="project" value="InterPro"/>
</dbReference>
<dbReference type="GO" id="GO:0015833">
    <property type="term" value="P:peptide transport"/>
    <property type="evidence" value="ECO:0007669"/>
    <property type="project" value="UniProtKB-KW"/>
</dbReference>
<dbReference type="GO" id="GO:0015031">
    <property type="term" value="P:protein transport"/>
    <property type="evidence" value="ECO:0007669"/>
    <property type="project" value="UniProtKB-KW"/>
</dbReference>
<dbReference type="CDD" id="cd03257">
    <property type="entry name" value="ABC_NikE_OppD_transporters"/>
    <property type="match status" value="1"/>
</dbReference>
<dbReference type="FunFam" id="3.40.50.300:FF:000443">
    <property type="entry name" value="Peptide transport system ATP-binding protein SapD"/>
    <property type="match status" value="1"/>
</dbReference>
<dbReference type="Gene3D" id="3.40.50.300">
    <property type="entry name" value="P-loop containing nucleotide triphosphate hydrolases"/>
    <property type="match status" value="1"/>
</dbReference>
<dbReference type="InterPro" id="IPR003593">
    <property type="entry name" value="AAA+_ATPase"/>
</dbReference>
<dbReference type="InterPro" id="IPR050388">
    <property type="entry name" value="ABC_Ni/Peptide_Import"/>
</dbReference>
<dbReference type="InterPro" id="IPR003439">
    <property type="entry name" value="ABC_transporter-like_ATP-bd"/>
</dbReference>
<dbReference type="InterPro" id="IPR013563">
    <property type="entry name" value="Oligopep_ABC_C"/>
</dbReference>
<dbReference type="InterPro" id="IPR027417">
    <property type="entry name" value="P-loop_NTPase"/>
</dbReference>
<dbReference type="NCBIfam" id="TIGR01727">
    <property type="entry name" value="oligo_HPY"/>
    <property type="match status" value="1"/>
</dbReference>
<dbReference type="NCBIfam" id="NF011674">
    <property type="entry name" value="PRK15093.1"/>
    <property type="match status" value="1"/>
</dbReference>
<dbReference type="PANTHER" id="PTHR43297">
    <property type="entry name" value="OLIGOPEPTIDE TRANSPORT ATP-BINDING PROTEIN APPD"/>
    <property type="match status" value="1"/>
</dbReference>
<dbReference type="PANTHER" id="PTHR43297:SF4">
    <property type="entry name" value="PUTRESCINE EXPORT SYSTEM ATP-BINDING PROTEIN SAPD"/>
    <property type="match status" value="1"/>
</dbReference>
<dbReference type="Pfam" id="PF00005">
    <property type="entry name" value="ABC_tran"/>
    <property type="match status" value="1"/>
</dbReference>
<dbReference type="Pfam" id="PF08352">
    <property type="entry name" value="oligo_HPY"/>
    <property type="match status" value="1"/>
</dbReference>
<dbReference type="SMART" id="SM00382">
    <property type="entry name" value="AAA"/>
    <property type="match status" value="1"/>
</dbReference>
<dbReference type="SUPFAM" id="SSF52540">
    <property type="entry name" value="P-loop containing nucleoside triphosphate hydrolases"/>
    <property type="match status" value="1"/>
</dbReference>
<dbReference type="PROSITE" id="PS50893">
    <property type="entry name" value="ABC_TRANSPORTER_2"/>
    <property type="match status" value="1"/>
</dbReference>
<keyword id="KW-0067">ATP-binding</keyword>
<keyword id="KW-0997">Cell inner membrane</keyword>
<keyword id="KW-1003">Cell membrane</keyword>
<keyword id="KW-0472">Membrane</keyword>
<keyword id="KW-0547">Nucleotide-binding</keyword>
<keyword id="KW-0571">Peptide transport</keyword>
<keyword id="KW-0653">Protein transport</keyword>
<keyword id="KW-1185">Reference proteome</keyword>
<keyword id="KW-0813">Transport</keyword>
<sequence length="330" mass="37661">MPLLDIRNLTIEFKTGDEWVKAVDRVSMTLTEGEIRGLVGESGSGKSLIAKAICGVNKDNWRVTADRMRFDDIDLLRLSARERRKLVGHNVSMIFQEPQSCLDPSERVGRQLMQNIPAWTYKGRWWQRFGWRKRRAIELLHRVGIKDHKDAMRSFPYELTEGECQKVMIAIALANQPRLLIADEPTNSMEPTTQAQIFRLLTRLNQNSNTTILLISHDLQMLSQWADKINVLYCGQTVETAPSKELVTMPHHPYTQALIRAIPDFGSAMPHKSRLNTLPGAIPLLEQLPIGCRLGPRCPYAQRECIVTPRLTGAKNHLYACHFPLNMEKE</sequence>